<feature type="chain" id="PRO_0000046269" description="Plasma membrane ATPase 1">
    <location>
        <begin position="1"/>
        <end position="919"/>
    </location>
</feature>
<feature type="topological domain" description="Cytoplasmic" evidence="2">
    <location>
        <begin position="1"/>
        <end position="113"/>
    </location>
</feature>
<feature type="transmembrane region" description="Helical; Name=1" evidence="2">
    <location>
        <begin position="114"/>
        <end position="134"/>
    </location>
</feature>
<feature type="topological domain" description="Extracellular" evidence="2">
    <location>
        <begin position="135"/>
        <end position="138"/>
    </location>
</feature>
<feature type="transmembrane region" description="Helical; Name=2" evidence="2">
    <location>
        <begin position="139"/>
        <end position="158"/>
    </location>
</feature>
<feature type="topological domain" description="Cytoplasmic" evidence="2">
    <location>
        <begin position="159"/>
        <end position="289"/>
    </location>
</feature>
<feature type="transmembrane region" description="Helical; Name=3" evidence="2">
    <location>
        <begin position="290"/>
        <end position="311"/>
    </location>
</feature>
<feature type="topological domain" description="Extracellular" evidence="2">
    <location>
        <begin position="312"/>
        <end position="322"/>
    </location>
</feature>
<feature type="transmembrane region" description="Helical; Name=4" evidence="2">
    <location>
        <begin position="323"/>
        <end position="345"/>
    </location>
</feature>
<feature type="topological domain" description="Cytoplasmic" evidence="2">
    <location>
        <begin position="346"/>
        <end position="717"/>
    </location>
</feature>
<feature type="transmembrane region" description="Helical; Name=5" evidence="2">
    <location>
        <begin position="718"/>
        <end position="736"/>
    </location>
</feature>
<feature type="topological domain" description="Extracellular" evidence="2">
    <location>
        <begin position="737"/>
        <end position="752"/>
    </location>
</feature>
<feature type="transmembrane region" description="Helical; Name=6" evidence="2">
    <location>
        <begin position="753"/>
        <end position="772"/>
    </location>
</feature>
<feature type="topological domain" description="Cytoplasmic" evidence="2">
    <location>
        <begin position="773"/>
        <end position="824"/>
    </location>
</feature>
<feature type="transmembrane region" description="Helical; Name=7" evidence="2">
    <location>
        <begin position="825"/>
        <end position="845"/>
    </location>
</feature>
<feature type="topological domain" description="Extracellular" evidence="2">
    <location>
        <begin position="846"/>
        <end position="858"/>
    </location>
</feature>
<feature type="transmembrane region" description="Helical; Name=8" evidence="2">
    <location>
        <begin position="859"/>
        <end position="875"/>
    </location>
</feature>
<feature type="topological domain" description="Cytoplasmic" evidence="2">
    <location>
        <begin position="876"/>
        <end position="919"/>
    </location>
</feature>
<feature type="region of interest" description="Disordered" evidence="3">
    <location>
        <begin position="1"/>
        <end position="73"/>
    </location>
</feature>
<feature type="compositionally biased region" description="Basic and acidic residues" evidence="3">
    <location>
        <begin position="1"/>
        <end position="16"/>
    </location>
</feature>
<feature type="compositionally biased region" description="Acidic residues" evidence="3">
    <location>
        <begin position="34"/>
        <end position="63"/>
    </location>
</feature>
<feature type="active site" description="4-aspartylphosphate intermediate" evidence="1">
    <location>
        <position position="376"/>
    </location>
</feature>
<feature type="binding site" evidence="1">
    <location>
        <position position="632"/>
    </location>
    <ligand>
        <name>Mg(2+)</name>
        <dbReference type="ChEBI" id="CHEBI:18420"/>
    </ligand>
</feature>
<feature type="binding site" evidence="1">
    <location>
        <position position="636"/>
    </location>
    <ligand>
        <name>Mg(2+)</name>
        <dbReference type="ChEBI" id="CHEBI:18420"/>
    </ligand>
</feature>
<feature type="modified residue" description="Phosphoserine" evidence="4">
    <location>
        <position position="89"/>
    </location>
</feature>
<feature type="modified residue" description="Phosphoserine" evidence="4">
    <location>
        <position position="494"/>
    </location>
</feature>
<feature type="modified residue" description="Phosphoserine" evidence="4">
    <location>
        <position position="899"/>
    </location>
</feature>
<evidence type="ECO:0000250" key="1"/>
<evidence type="ECO:0000255" key="2"/>
<evidence type="ECO:0000256" key="3">
    <source>
        <dbReference type="SAM" id="MobiDB-lite"/>
    </source>
</evidence>
<evidence type="ECO:0000269" key="4">
    <source>
    </source>
</evidence>
<evidence type="ECO:0000305" key="5"/>
<evidence type="ECO:0000305" key="6">
    <source>
    </source>
</evidence>
<sequence length="919" mass="99884">MADNAGEYHDAEKHAPEQQAPPPQQPAHAAAPAQDDEPDDDIDALIEELFSEDVQEEQEDNDDAPAAGEAKAVPEELLQTDMNTGLTMSEVEERRKKYGLNQMKEELENPFLKFIMFFVGPIQFVMEMAAALAAGLRDWVDFGVICALLMLNAVVGFVQEYQAGSIVDELKKSLALKAVVIREGQVHELEANEVVPGDILKLDEGTIICADGRVVTPDVHLQVDQSAITGESLAVDKHYGDPTFASSGVKRGEGLMVVTATGDSTFVGRAASLVNAAAGGTGHFTEVLNGIGTILLVLVLLTLFCIYTAAFYRSVRLARLLEYTLAITIIGVPVGLPAVVTTTMAVGAAYLAEKQAIVQKLSAIESLAGVEVLCSDKTGTLTKNKLSLGEPFTVSGVSGDDLVLTACLAASRKRKGLDAIDKAFLKALKNYPGPRSMLTKYKVIEFQPFDPVSKKVTAYVQAPDGTRITCVKGAPLWVLKTVEEDHPIPEDVLSAYKDKVGDLASRGYRSLGVARKIEGQHWEIMGIMPCSDPPRHDTARTISEAKRLGLRVKMLTGDAVDIAKETARQLGMGTNIYNAERLGLTGGGNMPGSEVYDFVEAADGFGEVFPQHKYAVVDILQQRGYLVAMTGDGVNDAPSLKKADTGIAVEGATDAARSAADIVFLAPGLSAIIDALKTSRQIFHRMYSYVVYRIALSLHLEIFLGLWLIIRNQLLNLELVVFIAIFADVATLAIAYDNAPYSMKPVKWNLPRLWGLSTVIGIVLAIGTWITNTTMIAQGQNRGIVQNFGVQDEVLFLEISLTENWLIFVTRCNGPFWSSIPSWQLSGAVLAVDILATMFCIFGWFKGGHQTSIVAVLRIWMYSFGIFCIMAGTYYILSESAGFDRMMNGKPKESRNQRSIEDLVVALQRTSTRHEKGDA</sequence>
<accession>P09627</accession>
<gene>
    <name type="primary">pma1</name>
    <name type="ORF">SPAC1071.10c</name>
</gene>
<reference key="1">
    <citation type="journal article" date="1987" name="J. Biol. Chem.">
        <title>Mutation of a conserved glycine residue modifies the vanadate sensitivity of the plasma membrane H+-ATPase from Schizosaccharomyces pombe.</title>
        <authorList>
            <person name="Ghislain M."/>
            <person name="Schlesser A."/>
            <person name="Goffeau A."/>
        </authorList>
    </citation>
    <scope>NUCLEOTIDE SEQUENCE [GENOMIC DNA]</scope>
    <scope>FUNCTION</scope>
    <scope>CATALYTIC ACTIVITY</scope>
</reference>
<reference key="2">
    <citation type="journal article" date="2002" name="Nature">
        <title>The genome sequence of Schizosaccharomyces pombe.</title>
        <authorList>
            <person name="Wood V."/>
            <person name="Gwilliam R."/>
            <person name="Rajandream M.A."/>
            <person name="Lyne M.H."/>
            <person name="Lyne R."/>
            <person name="Stewart A."/>
            <person name="Sgouros J.G."/>
            <person name="Peat N."/>
            <person name="Hayles J."/>
            <person name="Baker S.G."/>
            <person name="Basham D."/>
            <person name="Bowman S."/>
            <person name="Brooks K."/>
            <person name="Brown D."/>
            <person name="Brown S."/>
            <person name="Chillingworth T."/>
            <person name="Churcher C.M."/>
            <person name="Collins M."/>
            <person name="Connor R."/>
            <person name="Cronin A."/>
            <person name="Davis P."/>
            <person name="Feltwell T."/>
            <person name="Fraser A."/>
            <person name="Gentles S."/>
            <person name="Goble A."/>
            <person name="Hamlin N."/>
            <person name="Harris D.E."/>
            <person name="Hidalgo J."/>
            <person name="Hodgson G."/>
            <person name="Holroyd S."/>
            <person name="Hornsby T."/>
            <person name="Howarth S."/>
            <person name="Huckle E.J."/>
            <person name="Hunt S."/>
            <person name="Jagels K."/>
            <person name="James K.D."/>
            <person name="Jones L."/>
            <person name="Jones M."/>
            <person name="Leather S."/>
            <person name="McDonald S."/>
            <person name="McLean J."/>
            <person name="Mooney P."/>
            <person name="Moule S."/>
            <person name="Mungall K.L."/>
            <person name="Murphy L.D."/>
            <person name="Niblett D."/>
            <person name="Odell C."/>
            <person name="Oliver K."/>
            <person name="O'Neil S."/>
            <person name="Pearson D."/>
            <person name="Quail M.A."/>
            <person name="Rabbinowitsch E."/>
            <person name="Rutherford K.M."/>
            <person name="Rutter S."/>
            <person name="Saunders D."/>
            <person name="Seeger K."/>
            <person name="Sharp S."/>
            <person name="Skelton J."/>
            <person name="Simmonds M.N."/>
            <person name="Squares R."/>
            <person name="Squares S."/>
            <person name="Stevens K."/>
            <person name="Taylor K."/>
            <person name="Taylor R.G."/>
            <person name="Tivey A."/>
            <person name="Walsh S.V."/>
            <person name="Warren T."/>
            <person name="Whitehead S."/>
            <person name="Woodward J.R."/>
            <person name="Volckaert G."/>
            <person name="Aert R."/>
            <person name="Robben J."/>
            <person name="Grymonprez B."/>
            <person name="Weltjens I."/>
            <person name="Vanstreels E."/>
            <person name="Rieger M."/>
            <person name="Schaefer M."/>
            <person name="Mueller-Auer S."/>
            <person name="Gabel C."/>
            <person name="Fuchs M."/>
            <person name="Duesterhoeft A."/>
            <person name="Fritzc C."/>
            <person name="Holzer E."/>
            <person name="Moestl D."/>
            <person name="Hilbert H."/>
            <person name="Borzym K."/>
            <person name="Langer I."/>
            <person name="Beck A."/>
            <person name="Lehrach H."/>
            <person name="Reinhardt R."/>
            <person name="Pohl T.M."/>
            <person name="Eger P."/>
            <person name="Zimmermann W."/>
            <person name="Wedler H."/>
            <person name="Wambutt R."/>
            <person name="Purnelle B."/>
            <person name="Goffeau A."/>
            <person name="Cadieu E."/>
            <person name="Dreano S."/>
            <person name="Gloux S."/>
            <person name="Lelaure V."/>
            <person name="Mottier S."/>
            <person name="Galibert F."/>
            <person name="Aves S.J."/>
            <person name="Xiang Z."/>
            <person name="Hunt C."/>
            <person name="Moore K."/>
            <person name="Hurst S.M."/>
            <person name="Lucas M."/>
            <person name="Rochet M."/>
            <person name="Gaillardin C."/>
            <person name="Tallada V.A."/>
            <person name="Garzon A."/>
            <person name="Thode G."/>
            <person name="Daga R.R."/>
            <person name="Cruzado L."/>
            <person name="Jimenez J."/>
            <person name="Sanchez M."/>
            <person name="del Rey F."/>
            <person name="Benito J."/>
            <person name="Dominguez A."/>
            <person name="Revuelta J.L."/>
            <person name="Moreno S."/>
            <person name="Armstrong J."/>
            <person name="Forsburg S.L."/>
            <person name="Cerutti L."/>
            <person name="Lowe T."/>
            <person name="McCombie W.R."/>
            <person name="Paulsen I."/>
            <person name="Potashkin J."/>
            <person name="Shpakovski G.V."/>
            <person name="Ussery D."/>
            <person name="Barrell B.G."/>
            <person name="Nurse P."/>
        </authorList>
    </citation>
    <scope>NUCLEOTIDE SEQUENCE [LARGE SCALE GENOMIC DNA]</scope>
    <source>
        <strain>972 / ATCC 24843</strain>
    </source>
</reference>
<reference key="3">
    <citation type="journal article" date="2008" name="J. Proteome Res.">
        <title>Phosphoproteome analysis of fission yeast.</title>
        <authorList>
            <person name="Wilson-Grady J.T."/>
            <person name="Villen J."/>
            <person name="Gygi S.P."/>
        </authorList>
    </citation>
    <scope>PHOSPHORYLATION [LARGE SCALE ANALYSIS] AT SER-89; SER-494 AND SER-899</scope>
    <scope>IDENTIFICATION BY MASS SPECTROMETRY</scope>
</reference>
<dbReference type="EC" id="7.1.2.1" evidence="6"/>
<dbReference type="EMBL" id="J03498">
    <property type="protein sequence ID" value="AAA35324.1"/>
    <property type="molecule type" value="Genomic_DNA"/>
</dbReference>
<dbReference type="EMBL" id="CU329670">
    <property type="protein sequence ID" value="CAB59886.1"/>
    <property type="molecule type" value="Genomic_DNA"/>
</dbReference>
<dbReference type="PIR" id="A28454">
    <property type="entry name" value="PXZP1P"/>
</dbReference>
<dbReference type="RefSeq" id="NP_594360.1">
    <property type="nucleotide sequence ID" value="NM_001019781.2"/>
</dbReference>
<dbReference type="SMR" id="P09627"/>
<dbReference type="BioGRID" id="279117">
    <property type="interactions" value="13"/>
</dbReference>
<dbReference type="DIP" id="DIP-59125N"/>
<dbReference type="FunCoup" id="P09627">
    <property type="interactions" value="202"/>
</dbReference>
<dbReference type="IntAct" id="P09627">
    <property type="interactions" value="1"/>
</dbReference>
<dbReference type="STRING" id="284812.P09627"/>
<dbReference type="iPTMnet" id="P09627"/>
<dbReference type="PaxDb" id="4896-SPAC1071.10c.1"/>
<dbReference type="EnsemblFungi" id="SPAC1071.10c.1">
    <property type="protein sequence ID" value="SPAC1071.10c.1:pep"/>
    <property type="gene ID" value="SPAC1071.10c"/>
</dbReference>
<dbReference type="GeneID" id="2542664"/>
<dbReference type="KEGG" id="spo:2542664"/>
<dbReference type="PomBase" id="SPAC1071.10c">
    <property type="gene designation" value="pma1"/>
</dbReference>
<dbReference type="VEuPathDB" id="FungiDB:SPAC1071.10c"/>
<dbReference type="eggNOG" id="KOG0205">
    <property type="taxonomic scope" value="Eukaryota"/>
</dbReference>
<dbReference type="HOGENOM" id="CLU_002360_6_0_1"/>
<dbReference type="InParanoid" id="P09627"/>
<dbReference type="OMA" id="VIEFHPF"/>
<dbReference type="PhylomeDB" id="P09627"/>
<dbReference type="PRO" id="PR:P09627"/>
<dbReference type="Proteomes" id="UP000002485">
    <property type="component" value="Chromosome I"/>
</dbReference>
<dbReference type="GO" id="GO:0005737">
    <property type="term" value="C:cytoplasm"/>
    <property type="evidence" value="ECO:0007005"/>
    <property type="project" value="PomBase"/>
</dbReference>
<dbReference type="GO" id="GO:0005794">
    <property type="term" value="C:Golgi apparatus"/>
    <property type="evidence" value="ECO:0007005"/>
    <property type="project" value="PomBase"/>
</dbReference>
<dbReference type="GO" id="GO:0016020">
    <property type="term" value="C:membrane"/>
    <property type="evidence" value="ECO:0000314"/>
    <property type="project" value="PomBase"/>
</dbReference>
<dbReference type="GO" id="GO:0005886">
    <property type="term" value="C:plasma membrane"/>
    <property type="evidence" value="ECO:0000314"/>
    <property type="project" value="PomBase"/>
</dbReference>
<dbReference type="GO" id="GO:0005524">
    <property type="term" value="F:ATP binding"/>
    <property type="evidence" value="ECO:0007669"/>
    <property type="project" value="UniProtKB-KW"/>
</dbReference>
<dbReference type="GO" id="GO:0016887">
    <property type="term" value="F:ATP hydrolysis activity"/>
    <property type="evidence" value="ECO:0000315"/>
    <property type="project" value="PomBase"/>
</dbReference>
<dbReference type="GO" id="GO:0046872">
    <property type="term" value="F:metal ion binding"/>
    <property type="evidence" value="ECO:0007669"/>
    <property type="project" value="UniProtKB-KW"/>
</dbReference>
<dbReference type="GO" id="GO:0008553">
    <property type="term" value="F:P-type proton-exporting transporter activity"/>
    <property type="evidence" value="ECO:0000315"/>
    <property type="project" value="PomBase"/>
</dbReference>
<dbReference type="GO" id="GO:1901691">
    <property type="term" value="F:proton binding"/>
    <property type="evidence" value="ECO:0000314"/>
    <property type="project" value="PomBase"/>
</dbReference>
<dbReference type="GO" id="GO:0120029">
    <property type="term" value="P:proton export across plasma membrane"/>
    <property type="evidence" value="ECO:0000315"/>
    <property type="project" value="PomBase"/>
</dbReference>
<dbReference type="GO" id="GO:1902600">
    <property type="term" value="P:proton transmembrane transport"/>
    <property type="evidence" value="ECO:0000318"/>
    <property type="project" value="GO_Central"/>
</dbReference>
<dbReference type="GO" id="GO:0051453">
    <property type="term" value="P:regulation of intracellular pH"/>
    <property type="evidence" value="ECO:0000315"/>
    <property type="project" value="PomBase"/>
</dbReference>
<dbReference type="CDD" id="cd02076">
    <property type="entry name" value="P-type_ATPase_H"/>
    <property type="match status" value="1"/>
</dbReference>
<dbReference type="FunFam" id="2.70.150.10:FF:000011">
    <property type="entry name" value="Plasma membrane ATPase"/>
    <property type="match status" value="1"/>
</dbReference>
<dbReference type="FunFam" id="3.40.1110.10:FF:000005">
    <property type="entry name" value="Plasma membrane ATPase"/>
    <property type="match status" value="1"/>
</dbReference>
<dbReference type="FunFam" id="3.40.50.1000:FF:000008">
    <property type="entry name" value="Plasma membrane ATPase"/>
    <property type="match status" value="1"/>
</dbReference>
<dbReference type="Gene3D" id="3.40.1110.10">
    <property type="entry name" value="Calcium-transporting ATPase, cytoplasmic domain N"/>
    <property type="match status" value="1"/>
</dbReference>
<dbReference type="Gene3D" id="2.70.150.10">
    <property type="entry name" value="Calcium-transporting ATPase, cytoplasmic transduction domain A"/>
    <property type="match status" value="1"/>
</dbReference>
<dbReference type="Gene3D" id="1.20.1110.10">
    <property type="entry name" value="Calcium-transporting ATPase, transmembrane domain"/>
    <property type="match status" value="1"/>
</dbReference>
<dbReference type="Gene3D" id="3.40.50.1000">
    <property type="entry name" value="HAD superfamily/HAD-like"/>
    <property type="match status" value="1"/>
</dbReference>
<dbReference type="InterPro" id="IPR004014">
    <property type="entry name" value="ATPase_P-typ_cation-transptr_N"/>
</dbReference>
<dbReference type="InterPro" id="IPR023299">
    <property type="entry name" value="ATPase_P-typ_cyto_dom_N"/>
</dbReference>
<dbReference type="InterPro" id="IPR018303">
    <property type="entry name" value="ATPase_P-typ_P_site"/>
</dbReference>
<dbReference type="InterPro" id="IPR023298">
    <property type="entry name" value="ATPase_P-typ_TM_dom_sf"/>
</dbReference>
<dbReference type="InterPro" id="IPR008250">
    <property type="entry name" value="ATPase_P-typ_transduc_dom_A_sf"/>
</dbReference>
<dbReference type="InterPro" id="IPR036412">
    <property type="entry name" value="HAD-like_sf"/>
</dbReference>
<dbReference type="InterPro" id="IPR023214">
    <property type="entry name" value="HAD_sf"/>
</dbReference>
<dbReference type="InterPro" id="IPR006534">
    <property type="entry name" value="P-type_ATPase_IIIA"/>
</dbReference>
<dbReference type="InterPro" id="IPR001757">
    <property type="entry name" value="P_typ_ATPase"/>
</dbReference>
<dbReference type="InterPro" id="IPR044492">
    <property type="entry name" value="P_typ_ATPase_HD_dom"/>
</dbReference>
<dbReference type="NCBIfam" id="TIGR01647">
    <property type="entry name" value="ATPase-IIIA_H"/>
    <property type="match status" value="1"/>
</dbReference>
<dbReference type="NCBIfam" id="TIGR01494">
    <property type="entry name" value="ATPase_P-type"/>
    <property type="match status" value="2"/>
</dbReference>
<dbReference type="PANTHER" id="PTHR42861">
    <property type="entry name" value="CALCIUM-TRANSPORTING ATPASE"/>
    <property type="match status" value="1"/>
</dbReference>
<dbReference type="Pfam" id="PF00690">
    <property type="entry name" value="Cation_ATPase_N"/>
    <property type="match status" value="1"/>
</dbReference>
<dbReference type="Pfam" id="PF00122">
    <property type="entry name" value="E1-E2_ATPase"/>
    <property type="match status" value="1"/>
</dbReference>
<dbReference type="Pfam" id="PF00702">
    <property type="entry name" value="Hydrolase"/>
    <property type="match status" value="1"/>
</dbReference>
<dbReference type="PRINTS" id="PR00119">
    <property type="entry name" value="CATATPASE"/>
</dbReference>
<dbReference type="PRINTS" id="PR00120">
    <property type="entry name" value="HATPASE"/>
</dbReference>
<dbReference type="SFLD" id="SFLDG00002">
    <property type="entry name" value="C1.7:_P-type_atpase_like"/>
    <property type="match status" value="1"/>
</dbReference>
<dbReference type="SFLD" id="SFLDF00027">
    <property type="entry name" value="p-type_atpase"/>
    <property type="match status" value="1"/>
</dbReference>
<dbReference type="SMART" id="SM00831">
    <property type="entry name" value="Cation_ATPase_N"/>
    <property type="match status" value="1"/>
</dbReference>
<dbReference type="SUPFAM" id="SSF81653">
    <property type="entry name" value="Calcium ATPase, transduction domain A"/>
    <property type="match status" value="1"/>
</dbReference>
<dbReference type="SUPFAM" id="SSF81665">
    <property type="entry name" value="Calcium ATPase, transmembrane domain M"/>
    <property type="match status" value="1"/>
</dbReference>
<dbReference type="SUPFAM" id="SSF56784">
    <property type="entry name" value="HAD-like"/>
    <property type="match status" value="1"/>
</dbReference>
<dbReference type="PROSITE" id="PS00154">
    <property type="entry name" value="ATPASE_E1_E2"/>
    <property type="match status" value="1"/>
</dbReference>
<comment type="function">
    <text evidence="6">The plasma membrane ATPase of plants and fungi is a hydrogen ion pump. The proton gradient it generates drives the active transport of nutrients by H(+)-symport. The resulting external acidification and/or internal alkinization may mediate growth responses.</text>
</comment>
<comment type="catalytic activity">
    <reaction evidence="6">
        <text>ATP + H2O + H(+)(in) = ADP + phosphate + 2 H(+)(out)</text>
        <dbReference type="Rhea" id="RHEA:20852"/>
        <dbReference type="ChEBI" id="CHEBI:15377"/>
        <dbReference type="ChEBI" id="CHEBI:15378"/>
        <dbReference type="ChEBI" id="CHEBI:30616"/>
        <dbReference type="ChEBI" id="CHEBI:43474"/>
        <dbReference type="ChEBI" id="CHEBI:456216"/>
        <dbReference type="EC" id="7.1.2.1"/>
    </reaction>
    <physiologicalReaction direction="left-to-right" evidence="6">
        <dbReference type="Rhea" id="RHEA:20853"/>
    </physiologicalReaction>
</comment>
<comment type="subcellular location">
    <subcellularLocation>
        <location evidence="2">Cell membrane</location>
        <topology evidence="2">Multi-pass membrane protein</topology>
    </subcellularLocation>
</comment>
<comment type="similarity">
    <text evidence="5">Belongs to the cation transport ATPase (P-type) (TC 3.A.3) family. Type IIIA subfamily.</text>
</comment>
<keyword id="KW-0067">ATP-binding</keyword>
<keyword id="KW-1003">Cell membrane</keyword>
<keyword id="KW-0375">Hydrogen ion transport</keyword>
<keyword id="KW-0406">Ion transport</keyword>
<keyword id="KW-0460">Magnesium</keyword>
<keyword id="KW-0472">Membrane</keyword>
<keyword id="KW-0479">Metal-binding</keyword>
<keyword id="KW-0547">Nucleotide-binding</keyword>
<keyword id="KW-0597">Phosphoprotein</keyword>
<keyword id="KW-1185">Reference proteome</keyword>
<keyword id="KW-1278">Translocase</keyword>
<keyword id="KW-0812">Transmembrane</keyword>
<keyword id="KW-1133">Transmembrane helix</keyword>
<keyword id="KW-0813">Transport</keyword>
<name>PMA1_SCHPO</name>
<proteinExistence type="evidence at protein level"/>
<organism>
    <name type="scientific">Schizosaccharomyces pombe (strain 972 / ATCC 24843)</name>
    <name type="common">Fission yeast</name>
    <dbReference type="NCBI Taxonomy" id="284812"/>
    <lineage>
        <taxon>Eukaryota</taxon>
        <taxon>Fungi</taxon>
        <taxon>Dikarya</taxon>
        <taxon>Ascomycota</taxon>
        <taxon>Taphrinomycotina</taxon>
        <taxon>Schizosaccharomycetes</taxon>
        <taxon>Schizosaccharomycetales</taxon>
        <taxon>Schizosaccharomycetaceae</taxon>
        <taxon>Schizosaccharomyces</taxon>
    </lineage>
</organism>
<protein>
    <recommendedName>
        <fullName>Plasma membrane ATPase 1</fullName>
        <ecNumber evidence="6">7.1.2.1</ecNumber>
    </recommendedName>
    <alternativeName>
        <fullName>Proton pump 1</fullName>
    </alternativeName>
</protein>